<sequence>MPRQAASRLVVGEGEGPPGASGPAATMLRSLLLHSLRLCAQTASCLVLFPRFLGTAFMLWLLDFLCIRKHFLRRRHPDHPEPEVELNSEGEEMPPDDPPICVSDDNRLCTLASLKAVWHGQKLDFFKQAHEGGPAPNSEVVRPDGFQSQRILDYAQGTRPLVLNFGSCTUPPFMARMSAFQRLVTKYQRDVDFLIIYIEEAHPSDGWVTTDSPYVIPQHRSLEDRVSAARVLQQGAPGCALVLDTMANSSSSAYGAYFERLYVIQSGTIMYQGGRGPDGYQVSELRTWLERYDEQLHGTRPHRF</sequence>
<comment type="function">
    <text evidence="1">Plays a crucial role in the metabolism of thyroid hormones (TH) and has specific roles in TH activation and inactivation by deiodination (By similarity). Catalyzes the deiodination of L-thyroxine (T4) to 3,3',5'-triiodothyronine (rT3), 3,5,3'-triiodothyronine (T3) to 3,3'-diiodothyronine (3,3'-T2), 3,5-diiodothyronine (3,5-T2) to 3-monoiodothyronine (3-T1), rT3 to 3',5'-diiodothyronine (3',5'-T2) and 3,3'-T2 to 3'-monoiodothyronine (3'-T1) via inner-ring deiodination (IRD) (By similarity). Catalyzes the deiodination of 3-T1 to L-thyronine (T0) via outer-ring deiodination (ORD) (By similarity). Catalyzes the tyrosyl ring deiodinations of 3,3',5,5'-tetraiodothyronamine, 3,3',5'-triiodothyronamine, 3,5,3'-triiodothyronamine, 3,5-diiodothyronamine, 3,3'-diiodothyronamine and 3-iodothyronamine (By similarity).</text>
</comment>
<comment type="catalytic activity">
    <reaction evidence="1">
        <text>3,3',5'-triiodo-L-thyronine + iodide + A + H(+) = L-thyroxine + AH2</text>
        <dbReference type="Rhea" id="RHEA:18897"/>
        <dbReference type="ChEBI" id="CHEBI:13193"/>
        <dbReference type="ChEBI" id="CHEBI:15378"/>
        <dbReference type="ChEBI" id="CHEBI:16382"/>
        <dbReference type="ChEBI" id="CHEBI:17499"/>
        <dbReference type="ChEBI" id="CHEBI:57261"/>
        <dbReference type="ChEBI" id="CHEBI:58448"/>
        <dbReference type="EC" id="1.21.99.3"/>
    </reaction>
    <physiologicalReaction direction="right-to-left" evidence="1">
        <dbReference type="Rhea" id="RHEA:18899"/>
    </physiologicalReaction>
</comment>
<comment type="catalytic activity">
    <reaction evidence="1">
        <text>3,3'-diiodo-L-thyronine + iodide + A + H(+) = 3,3',5-triiodo-L-thyronine + AH2</text>
        <dbReference type="Rhea" id="RHEA:82571"/>
        <dbReference type="ChEBI" id="CHEBI:13193"/>
        <dbReference type="ChEBI" id="CHEBI:15378"/>
        <dbReference type="ChEBI" id="CHEBI:16382"/>
        <dbReference type="ChEBI" id="CHEBI:17499"/>
        <dbReference type="ChEBI" id="CHEBI:176514"/>
        <dbReference type="ChEBI" id="CHEBI:533015"/>
    </reaction>
    <physiologicalReaction direction="right-to-left" evidence="1">
        <dbReference type="Rhea" id="RHEA:82573"/>
    </physiologicalReaction>
</comment>
<comment type="catalytic activity">
    <reaction evidence="1">
        <text>3-iodo-L-thyronine + iodide + A + H(+) = 3,5-diiodo-L-thyronine + AH2</text>
        <dbReference type="Rhea" id="RHEA:82895"/>
        <dbReference type="ChEBI" id="CHEBI:13193"/>
        <dbReference type="ChEBI" id="CHEBI:15378"/>
        <dbReference type="ChEBI" id="CHEBI:16382"/>
        <dbReference type="ChEBI" id="CHEBI:17499"/>
        <dbReference type="ChEBI" id="CHEBI:232626"/>
        <dbReference type="ChEBI" id="CHEBI:232627"/>
    </reaction>
    <physiologicalReaction direction="right-to-left" evidence="1">
        <dbReference type="Rhea" id="RHEA:82897"/>
    </physiologicalReaction>
</comment>
<comment type="catalytic activity">
    <reaction evidence="1">
        <text>L-thyronine + iodide + A + H(+) = 3-iodo-L-thyronine + AH2</text>
        <dbReference type="Rhea" id="RHEA:83771"/>
        <dbReference type="ChEBI" id="CHEBI:13193"/>
        <dbReference type="ChEBI" id="CHEBI:15378"/>
        <dbReference type="ChEBI" id="CHEBI:16382"/>
        <dbReference type="ChEBI" id="CHEBI:17499"/>
        <dbReference type="ChEBI" id="CHEBI:232627"/>
        <dbReference type="ChEBI" id="CHEBI:233333"/>
    </reaction>
    <physiologicalReaction direction="right-to-left" evidence="1">
        <dbReference type="Rhea" id="RHEA:83773"/>
    </physiologicalReaction>
</comment>
<comment type="catalytic activity">
    <reaction evidence="1">
        <text>3',5'-diiodo-L-thyronine + iodide + A + H(+) = 3,3',5'-triiodo-L-thyronine + AH2</text>
        <dbReference type="Rhea" id="RHEA:83775"/>
        <dbReference type="ChEBI" id="CHEBI:13193"/>
        <dbReference type="ChEBI" id="CHEBI:15378"/>
        <dbReference type="ChEBI" id="CHEBI:16382"/>
        <dbReference type="ChEBI" id="CHEBI:17499"/>
        <dbReference type="ChEBI" id="CHEBI:57261"/>
        <dbReference type="ChEBI" id="CHEBI:195762"/>
    </reaction>
    <physiologicalReaction direction="right-to-left" evidence="1">
        <dbReference type="Rhea" id="RHEA:83777"/>
    </physiologicalReaction>
</comment>
<comment type="catalytic activity">
    <reaction evidence="1">
        <text>3'-iodo-L-thyronine + iodide + A + H(+) = 3,3'-diiodo-L-thyronine + AH2</text>
        <dbReference type="Rhea" id="RHEA:83779"/>
        <dbReference type="ChEBI" id="CHEBI:13193"/>
        <dbReference type="ChEBI" id="CHEBI:15378"/>
        <dbReference type="ChEBI" id="CHEBI:16382"/>
        <dbReference type="ChEBI" id="CHEBI:17499"/>
        <dbReference type="ChEBI" id="CHEBI:176514"/>
        <dbReference type="ChEBI" id="CHEBI:232695"/>
    </reaction>
    <physiologicalReaction direction="right-to-left" evidence="1">
        <dbReference type="Rhea" id="RHEA:83781"/>
    </physiologicalReaction>
</comment>
<comment type="catalytic activity">
    <reaction evidence="1">
        <text>3,3',5'-triiodothyronamine + iodide + A + H(+) = 3,3',5,5'-tetraiodothyronamine + AH2</text>
        <dbReference type="Rhea" id="RHEA:83807"/>
        <dbReference type="ChEBI" id="CHEBI:13193"/>
        <dbReference type="ChEBI" id="CHEBI:15378"/>
        <dbReference type="ChEBI" id="CHEBI:16382"/>
        <dbReference type="ChEBI" id="CHEBI:17499"/>
        <dbReference type="ChEBI" id="CHEBI:233343"/>
        <dbReference type="ChEBI" id="CHEBI:233344"/>
    </reaction>
    <physiologicalReaction direction="right-to-left" evidence="1">
        <dbReference type="Rhea" id="RHEA:83809"/>
    </physiologicalReaction>
</comment>
<comment type="catalytic activity">
    <reaction evidence="1">
        <text>3',5'-diiodothyronamine + iodide + A + H(+) = 3,3',5'-triiodothyronamine + AH2</text>
        <dbReference type="Rhea" id="RHEA:83799"/>
        <dbReference type="ChEBI" id="CHEBI:13193"/>
        <dbReference type="ChEBI" id="CHEBI:15378"/>
        <dbReference type="ChEBI" id="CHEBI:16382"/>
        <dbReference type="ChEBI" id="CHEBI:17499"/>
        <dbReference type="ChEBI" id="CHEBI:233342"/>
        <dbReference type="ChEBI" id="CHEBI:233343"/>
    </reaction>
    <physiologicalReaction direction="right-to-left" evidence="1">
        <dbReference type="Rhea" id="RHEA:83801"/>
    </physiologicalReaction>
</comment>
<comment type="catalytic activity">
    <reaction evidence="1">
        <text>3,3'-diiodothyronamine + iodide + A + H(+) = 3,3',5-triiodothyronamine + AH2</text>
        <dbReference type="Rhea" id="RHEA:83811"/>
        <dbReference type="ChEBI" id="CHEBI:13193"/>
        <dbReference type="ChEBI" id="CHEBI:15378"/>
        <dbReference type="ChEBI" id="CHEBI:16382"/>
        <dbReference type="ChEBI" id="CHEBI:17499"/>
        <dbReference type="ChEBI" id="CHEBI:233341"/>
        <dbReference type="ChEBI" id="CHEBI:233426"/>
    </reaction>
    <physiologicalReaction direction="right-to-left" evidence="1">
        <dbReference type="Rhea" id="RHEA:83813"/>
    </physiologicalReaction>
</comment>
<comment type="catalytic activity">
    <reaction evidence="1">
        <text>3-iodothyronamine + iodide + A + H(+) = 3,5-diiodothyronamine + AH2</text>
        <dbReference type="Rhea" id="RHEA:83823"/>
        <dbReference type="ChEBI" id="CHEBI:13193"/>
        <dbReference type="ChEBI" id="CHEBI:15378"/>
        <dbReference type="ChEBI" id="CHEBI:16382"/>
        <dbReference type="ChEBI" id="CHEBI:17499"/>
        <dbReference type="ChEBI" id="CHEBI:231647"/>
        <dbReference type="ChEBI" id="CHEBI:233340"/>
    </reaction>
    <physiologicalReaction direction="right-to-left" evidence="1">
        <dbReference type="Rhea" id="RHEA:83825"/>
    </physiologicalReaction>
</comment>
<comment type="catalytic activity">
    <reaction evidence="1">
        <text>3'-iodothyronamine + iodide + A + H(+) = 3,3'-diiodothyronamine + AH2</text>
        <dbReference type="Rhea" id="RHEA:83815"/>
        <dbReference type="ChEBI" id="CHEBI:13193"/>
        <dbReference type="ChEBI" id="CHEBI:15378"/>
        <dbReference type="ChEBI" id="CHEBI:16382"/>
        <dbReference type="ChEBI" id="CHEBI:17499"/>
        <dbReference type="ChEBI" id="CHEBI:233339"/>
        <dbReference type="ChEBI" id="CHEBI:233341"/>
    </reaction>
    <physiologicalReaction direction="right-to-left" evidence="1">
        <dbReference type="Rhea" id="RHEA:83817"/>
    </physiologicalReaction>
</comment>
<comment type="catalytic activity">
    <reaction evidence="1">
        <text>thyronamine + iodide + A + H(+) = 3-iodothyronamine + AH2</text>
        <dbReference type="Rhea" id="RHEA:83819"/>
        <dbReference type="ChEBI" id="CHEBI:13193"/>
        <dbReference type="ChEBI" id="CHEBI:15378"/>
        <dbReference type="ChEBI" id="CHEBI:16382"/>
        <dbReference type="ChEBI" id="CHEBI:17499"/>
        <dbReference type="ChEBI" id="CHEBI:231647"/>
        <dbReference type="ChEBI" id="CHEBI:233334"/>
    </reaction>
    <physiologicalReaction direction="right-to-left" evidence="1">
        <dbReference type="Rhea" id="RHEA:83821"/>
    </physiologicalReaction>
</comment>
<comment type="subunit">
    <text evidence="1">Monomer. Homodimer. May undergo minor heretodimerization with DIO1 and DIO2 (By similarity).</text>
</comment>
<comment type="subcellular location">
    <subcellularLocation>
        <location evidence="1">Cell membrane</location>
        <topology evidence="2">Single-pass type II membrane protein</topology>
    </subcellularLocation>
    <subcellularLocation>
        <location evidence="1">Endosome membrane</location>
        <topology evidence="2">Single-pass type II membrane protein</topology>
    </subcellularLocation>
</comment>
<comment type="similarity">
    <text evidence="4">Belongs to the iodothyronine deiodinase family.</text>
</comment>
<comment type="caution">
    <text evidence="4">It is uncertain whether Met-1 or Met-27 is the initiator.</text>
</comment>
<comment type="sequence caution" evidence="4">
    <conflict type="erroneous initiation">
        <sequence resource="EMBL-CDS" id="AAI06848"/>
    </conflict>
    <text>Truncated N-terminus.</text>
</comment>
<comment type="sequence caution" evidence="4">
    <conflict type="erroneous initiation">
        <sequence resource="EMBL-CDS" id="AAI06849"/>
    </conflict>
    <text>Truncated N-terminus.</text>
</comment>
<comment type="sequence caution" evidence="4">
    <conflict type="erroneous initiation">
        <sequence resource="EMBL-CDS" id="AAL23960"/>
    </conflict>
    <text>Truncated N-terminus.</text>
</comment>
<comment type="sequence caution" evidence="4">
    <conflict type="erroneous initiation">
        <sequence resource="EMBL-CDS" id="BAE24483"/>
    </conflict>
    <text>Truncated N-terminus.</text>
</comment>
<comment type="sequence caution" evidence="4">
    <conflict type="erroneous initiation">
        <sequence resource="EMBL-CDS" id="BAE26869"/>
    </conflict>
    <text>Truncated N-terminus.</text>
</comment>
<organism>
    <name type="scientific">Mus musculus</name>
    <name type="common">Mouse</name>
    <dbReference type="NCBI Taxonomy" id="10090"/>
    <lineage>
        <taxon>Eukaryota</taxon>
        <taxon>Metazoa</taxon>
        <taxon>Chordata</taxon>
        <taxon>Craniata</taxon>
        <taxon>Vertebrata</taxon>
        <taxon>Euteleostomi</taxon>
        <taxon>Mammalia</taxon>
        <taxon>Eutheria</taxon>
        <taxon>Euarchontoglires</taxon>
        <taxon>Glires</taxon>
        <taxon>Rodentia</taxon>
        <taxon>Myomorpha</taxon>
        <taxon>Muroidea</taxon>
        <taxon>Muridae</taxon>
        <taxon>Murinae</taxon>
        <taxon>Mus</taxon>
        <taxon>Mus</taxon>
    </lineage>
</organism>
<reference key="1">
    <citation type="journal article" date="1999" name="Endocrinology">
        <title>Isolation and characterization of the mouse gene for the type 3 iodothyronine deiodinase.</title>
        <authorList>
            <person name="Hernandez A."/>
            <person name="Lyon G.J."/>
            <person name="Schneider M.J."/>
            <person name="St Germain D.L."/>
        </authorList>
    </citation>
    <scope>NUCLEOTIDE SEQUENCE [GENOMIC DNA]</scope>
    <source>
        <strain>129/SvJ</strain>
    </source>
</reference>
<reference key="2">
    <citation type="journal article" date="2005" name="Science">
        <title>The transcriptional landscape of the mammalian genome.</title>
        <authorList>
            <person name="Carninci P."/>
            <person name="Kasukawa T."/>
            <person name="Katayama S."/>
            <person name="Gough J."/>
            <person name="Frith M.C."/>
            <person name="Maeda N."/>
            <person name="Oyama R."/>
            <person name="Ravasi T."/>
            <person name="Lenhard B."/>
            <person name="Wells C."/>
            <person name="Kodzius R."/>
            <person name="Shimokawa K."/>
            <person name="Bajic V.B."/>
            <person name="Brenner S.E."/>
            <person name="Batalov S."/>
            <person name="Forrest A.R."/>
            <person name="Zavolan M."/>
            <person name="Davis M.J."/>
            <person name="Wilming L.G."/>
            <person name="Aidinis V."/>
            <person name="Allen J.E."/>
            <person name="Ambesi-Impiombato A."/>
            <person name="Apweiler R."/>
            <person name="Aturaliya R.N."/>
            <person name="Bailey T.L."/>
            <person name="Bansal M."/>
            <person name="Baxter L."/>
            <person name="Beisel K.W."/>
            <person name="Bersano T."/>
            <person name="Bono H."/>
            <person name="Chalk A.M."/>
            <person name="Chiu K.P."/>
            <person name="Choudhary V."/>
            <person name="Christoffels A."/>
            <person name="Clutterbuck D.R."/>
            <person name="Crowe M.L."/>
            <person name="Dalla E."/>
            <person name="Dalrymple B.P."/>
            <person name="de Bono B."/>
            <person name="Della Gatta G."/>
            <person name="di Bernardo D."/>
            <person name="Down T."/>
            <person name="Engstrom P."/>
            <person name="Fagiolini M."/>
            <person name="Faulkner G."/>
            <person name="Fletcher C.F."/>
            <person name="Fukushima T."/>
            <person name="Furuno M."/>
            <person name="Futaki S."/>
            <person name="Gariboldi M."/>
            <person name="Georgii-Hemming P."/>
            <person name="Gingeras T.R."/>
            <person name="Gojobori T."/>
            <person name="Green R.E."/>
            <person name="Gustincich S."/>
            <person name="Harbers M."/>
            <person name="Hayashi Y."/>
            <person name="Hensch T.K."/>
            <person name="Hirokawa N."/>
            <person name="Hill D."/>
            <person name="Huminiecki L."/>
            <person name="Iacono M."/>
            <person name="Ikeo K."/>
            <person name="Iwama A."/>
            <person name="Ishikawa T."/>
            <person name="Jakt M."/>
            <person name="Kanapin A."/>
            <person name="Katoh M."/>
            <person name="Kawasawa Y."/>
            <person name="Kelso J."/>
            <person name="Kitamura H."/>
            <person name="Kitano H."/>
            <person name="Kollias G."/>
            <person name="Krishnan S.P."/>
            <person name="Kruger A."/>
            <person name="Kummerfeld S.K."/>
            <person name="Kurochkin I.V."/>
            <person name="Lareau L.F."/>
            <person name="Lazarevic D."/>
            <person name="Lipovich L."/>
            <person name="Liu J."/>
            <person name="Liuni S."/>
            <person name="McWilliam S."/>
            <person name="Madan Babu M."/>
            <person name="Madera M."/>
            <person name="Marchionni L."/>
            <person name="Matsuda H."/>
            <person name="Matsuzawa S."/>
            <person name="Miki H."/>
            <person name="Mignone F."/>
            <person name="Miyake S."/>
            <person name="Morris K."/>
            <person name="Mottagui-Tabar S."/>
            <person name="Mulder N."/>
            <person name="Nakano N."/>
            <person name="Nakauchi H."/>
            <person name="Ng P."/>
            <person name="Nilsson R."/>
            <person name="Nishiguchi S."/>
            <person name="Nishikawa S."/>
            <person name="Nori F."/>
            <person name="Ohara O."/>
            <person name="Okazaki Y."/>
            <person name="Orlando V."/>
            <person name="Pang K.C."/>
            <person name="Pavan W.J."/>
            <person name="Pavesi G."/>
            <person name="Pesole G."/>
            <person name="Petrovsky N."/>
            <person name="Piazza S."/>
            <person name="Reed J."/>
            <person name="Reid J.F."/>
            <person name="Ring B.Z."/>
            <person name="Ringwald M."/>
            <person name="Rost B."/>
            <person name="Ruan Y."/>
            <person name="Salzberg S.L."/>
            <person name="Sandelin A."/>
            <person name="Schneider C."/>
            <person name="Schoenbach C."/>
            <person name="Sekiguchi K."/>
            <person name="Semple C.A."/>
            <person name="Seno S."/>
            <person name="Sessa L."/>
            <person name="Sheng Y."/>
            <person name="Shibata Y."/>
            <person name="Shimada H."/>
            <person name="Shimada K."/>
            <person name="Silva D."/>
            <person name="Sinclair B."/>
            <person name="Sperling S."/>
            <person name="Stupka E."/>
            <person name="Sugiura K."/>
            <person name="Sultana R."/>
            <person name="Takenaka Y."/>
            <person name="Taki K."/>
            <person name="Tammoja K."/>
            <person name="Tan S.L."/>
            <person name="Tang S."/>
            <person name="Taylor M.S."/>
            <person name="Tegner J."/>
            <person name="Teichmann S.A."/>
            <person name="Ueda H.R."/>
            <person name="van Nimwegen E."/>
            <person name="Verardo R."/>
            <person name="Wei C.L."/>
            <person name="Yagi K."/>
            <person name="Yamanishi H."/>
            <person name="Zabarovsky E."/>
            <person name="Zhu S."/>
            <person name="Zimmer A."/>
            <person name="Hide W."/>
            <person name="Bult C."/>
            <person name="Grimmond S.M."/>
            <person name="Teasdale R.D."/>
            <person name="Liu E.T."/>
            <person name="Brusic V."/>
            <person name="Quackenbush J."/>
            <person name="Wahlestedt C."/>
            <person name="Mattick J.S."/>
            <person name="Hume D.A."/>
            <person name="Kai C."/>
            <person name="Sasaki D."/>
            <person name="Tomaru Y."/>
            <person name="Fukuda S."/>
            <person name="Kanamori-Katayama M."/>
            <person name="Suzuki M."/>
            <person name="Aoki J."/>
            <person name="Arakawa T."/>
            <person name="Iida J."/>
            <person name="Imamura K."/>
            <person name="Itoh M."/>
            <person name="Kato T."/>
            <person name="Kawaji H."/>
            <person name="Kawagashira N."/>
            <person name="Kawashima T."/>
            <person name="Kojima M."/>
            <person name="Kondo S."/>
            <person name="Konno H."/>
            <person name="Nakano K."/>
            <person name="Ninomiya N."/>
            <person name="Nishio T."/>
            <person name="Okada M."/>
            <person name="Plessy C."/>
            <person name="Shibata K."/>
            <person name="Shiraki T."/>
            <person name="Suzuki S."/>
            <person name="Tagami M."/>
            <person name="Waki K."/>
            <person name="Watahiki A."/>
            <person name="Okamura-Oho Y."/>
            <person name="Suzuki H."/>
            <person name="Kawai J."/>
            <person name="Hayashizaki Y."/>
        </authorList>
    </citation>
    <scope>NUCLEOTIDE SEQUENCE [LARGE SCALE MRNA]</scope>
    <source>
        <strain>C57BL/6J</strain>
        <tissue>Head</tissue>
        <tissue>Placenta</tissue>
    </source>
</reference>
<reference key="3">
    <citation type="journal article" date="2009" name="PLoS Biol.">
        <title>Lineage-specific biology revealed by a finished genome assembly of the mouse.</title>
        <authorList>
            <person name="Church D.M."/>
            <person name="Goodstadt L."/>
            <person name="Hillier L.W."/>
            <person name="Zody M.C."/>
            <person name="Goldstein S."/>
            <person name="She X."/>
            <person name="Bult C.J."/>
            <person name="Agarwala R."/>
            <person name="Cherry J.L."/>
            <person name="DiCuccio M."/>
            <person name="Hlavina W."/>
            <person name="Kapustin Y."/>
            <person name="Meric P."/>
            <person name="Maglott D."/>
            <person name="Birtle Z."/>
            <person name="Marques A.C."/>
            <person name="Graves T."/>
            <person name="Zhou S."/>
            <person name="Teague B."/>
            <person name="Potamousis K."/>
            <person name="Churas C."/>
            <person name="Place M."/>
            <person name="Herschleb J."/>
            <person name="Runnheim R."/>
            <person name="Forrest D."/>
            <person name="Amos-Landgraf J."/>
            <person name="Schwartz D.C."/>
            <person name="Cheng Z."/>
            <person name="Lindblad-Toh K."/>
            <person name="Eichler E.E."/>
            <person name="Ponting C.P."/>
        </authorList>
    </citation>
    <scope>NUCLEOTIDE SEQUENCE [LARGE SCALE GENOMIC DNA]</scope>
    <source>
        <strain>C57BL/6J</strain>
    </source>
</reference>
<reference key="4">
    <citation type="journal article" date="2004" name="Genome Res.">
        <title>The status, quality, and expansion of the NIH full-length cDNA project: the Mammalian Gene Collection (MGC).</title>
        <authorList>
            <consortium name="The MGC Project Team"/>
        </authorList>
    </citation>
    <scope>NUCLEOTIDE SEQUENCE [LARGE SCALE MRNA] OF 11-304</scope>
</reference>
<accession>Q91ZI8</accession>
<accession>G3UY28</accession>
<accession>Q3UKD2</accession>
<protein>
    <recommendedName>
        <fullName>Thyroxine 5-deiodinase</fullName>
        <ecNumber evidence="1">1.21.99.3</ecNumber>
    </recommendedName>
    <alternativeName>
        <fullName>5DIII</fullName>
    </alternativeName>
    <alternativeName>
        <fullName>DIOIII</fullName>
    </alternativeName>
    <alternativeName>
        <fullName>Type 3 DI</fullName>
    </alternativeName>
    <alternativeName>
        <fullName>Type III iodothyronine deiodinase</fullName>
    </alternativeName>
</protein>
<proteinExistence type="evidence at protein level"/>
<name>IOD3_MOUSE</name>
<evidence type="ECO:0000250" key="1">
    <source>
        <dbReference type="UniProtKB" id="P55073"/>
    </source>
</evidence>
<evidence type="ECO:0000255" key="2"/>
<evidence type="ECO:0000256" key="3">
    <source>
        <dbReference type="SAM" id="MobiDB-lite"/>
    </source>
</evidence>
<evidence type="ECO:0000305" key="4"/>
<evidence type="ECO:0007829" key="5">
    <source>
        <dbReference type="PDB" id="4TR3"/>
    </source>
</evidence>
<dbReference type="EC" id="1.21.99.3" evidence="1"/>
<dbReference type="EMBL" id="AF426023">
    <property type="protein sequence ID" value="AAL23960.1"/>
    <property type="status" value="ALT_INIT"/>
    <property type="molecule type" value="Genomic_DNA"/>
</dbReference>
<dbReference type="EMBL" id="AK140797">
    <property type="protein sequence ID" value="BAE24483.1"/>
    <property type="status" value="ALT_INIT"/>
    <property type="molecule type" value="mRNA"/>
</dbReference>
<dbReference type="EMBL" id="AK146060">
    <property type="protein sequence ID" value="BAE26869.1"/>
    <property type="status" value="ALT_INIT"/>
    <property type="molecule type" value="mRNA"/>
</dbReference>
<dbReference type="EMBL" id="AL591207">
    <property type="status" value="NOT_ANNOTATED_CDS"/>
    <property type="molecule type" value="Genomic_DNA"/>
</dbReference>
<dbReference type="EMBL" id="BC106847">
    <property type="protein sequence ID" value="AAI06848.1"/>
    <property type="status" value="ALT_INIT"/>
    <property type="molecule type" value="mRNA"/>
</dbReference>
<dbReference type="EMBL" id="BC106848">
    <property type="protein sequence ID" value="AAI06849.1"/>
    <property type="status" value="ALT_INIT"/>
    <property type="molecule type" value="mRNA"/>
</dbReference>
<dbReference type="CCDS" id="CCDS26171.2"/>
<dbReference type="RefSeq" id="NP_742117.2">
    <property type="nucleotide sequence ID" value="NM_172119.2"/>
</dbReference>
<dbReference type="PDB" id="4TR3">
    <property type="method" value="X-ray"/>
    <property type="resolution" value="1.90 A"/>
    <property type="chains" value="A=120-304"/>
</dbReference>
<dbReference type="PDB" id="4TR4">
    <property type="method" value="X-ray"/>
    <property type="resolution" value="1.93 A"/>
    <property type="chains" value="A=120-304"/>
</dbReference>
<dbReference type="PDBsum" id="4TR3"/>
<dbReference type="PDBsum" id="4TR4"/>
<dbReference type="SMR" id="Q91ZI8"/>
<dbReference type="BioGRID" id="223413">
    <property type="interactions" value="1"/>
</dbReference>
<dbReference type="FunCoup" id="Q91ZI8">
    <property type="interactions" value="377"/>
</dbReference>
<dbReference type="STRING" id="10090.ENSMUSP00000133920"/>
<dbReference type="PhosphoSitePlus" id="Q91ZI8"/>
<dbReference type="PaxDb" id="10090-ENSMUSP00000133920"/>
<dbReference type="Antibodypedia" id="56330">
    <property type="antibodies" value="307 antibodies from 28 providers"/>
</dbReference>
<dbReference type="DNASU" id="107585"/>
<dbReference type="Ensembl" id="ENSMUST00000173014.3">
    <property type="protein sequence ID" value="ENSMUSP00000133920.3"/>
    <property type="gene ID" value="ENSMUSG00000075707.7"/>
</dbReference>
<dbReference type="GeneID" id="107585"/>
<dbReference type="KEGG" id="mmu:107585"/>
<dbReference type="UCSC" id="uc007pbi.1">
    <property type="organism name" value="mouse"/>
</dbReference>
<dbReference type="AGR" id="MGI:1306782"/>
<dbReference type="CTD" id="1735"/>
<dbReference type="MGI" id="MGI:1306782">
    <property type="gene designation" value="Dio3"/>
</dbReference>
<dbReference type="VEuPathDB" id="HostDB:ENSMUSG00000075707"/>
<dbReference type="eggNOG" id="ENOG502S5FA">
    <property type="taxonomic scope" value="Eukaryota"/>
</dbReference>
<dbReference type="GeneTree" id="ENSGT00940000154482"/>
<dbReference type="HOGENOM" id="CLU_089345_0_0_1"/>
<dbReference type="InParanoid" id="Q91ZI8"/>
<dbReference type="OMA" id="CSXPPFM"/>
<dbReference type="OrthoDB" id="428577at2759"/>
<dbReference type="PhylomeDB" id="Q91ZI8"/>
<dbReference type="TreeFam" id="TF329721"/>
<dbReference type="BRENDA" id="1.21.99.3">
    <property type="organism ID" value="3474"/>
</dbReference>
<dbReference type="Reactome" id="R-MMU-350864">
    <property type="pathway name" value="Regulation of thyroid hormone activity"/>
</dbReference>
<dbReference type="BioGRID-ORCS" id="107585">
    <property type="hits" value="3 hits in 78 CRISPR screens"/>
</dbReference>
<dbReference type="EvolutionaryTrace" id="Q91ZI8"/>
<dbReference type="PRO" id="PR:Q91ZI8"/>
<dbReference type="Proteomes" id="UP000000589">
    <property type="component" value="Chromosome 12"/>
</dbReference>
<dbReference type="RNAct" id="Q91ZI8">
    <property type="molecule type" value="protein"/>
</dbReference>
<dbReference type="Bgee" id="ENSMUSG00000075707">
    <property type="expression patterns" value="Expressed in placenta and 61 other cell types or tissues"/>
</dbReference>
<dbReference type="ExpressionAtlas" id="Q91ZI8">
    <property type="expression patterns" value="baseline and differential"/>
</dbReference>
<dbReference type="GO" id="GO:0010008">
    <property type="term" value="C:endosome membrane"/>
    <property type="evidence" value="ECO:0007669"/>
    <property type="project" value="UniProtKB-SubCell"/>
</dbReference>
<dbReference type="GO" id="GO:0005886">
    <property type="term" value="C:plasma membrane"/>
    <property type="evidence" value="ECO:0007669"/>
    <property type="project" value="UniProtKB-SubCell"/>
</dbReference>
<dbReference type="GO" id="GO:0004800">
    <property type="term" value="F:thyroxine 5'-deiodinase activity"/>
    <property type="evidence" value="ECO:0000315"/>
    <property type="project" value="MGI"/>
</dbReference>
<dbReference type="GO" id="GO:0033798">
    <property type="term" value="F:thyroxine 5-deiodinase activity"/>
    <property type="evidence" value="ECO:0000314"/>
    <property type="project" value="UniProtKB"/>
</dbReference>
<dbReference type="GO" id="GO:0006915">
    <property type="term" value="P:apoptotic process"/>
    <property type="evidence" value="ECO:0000315"/>
    <property type="project" value="MGI"/>
</dbReference>
<dbReference type="GO" id="GO:0070342">
    <property type="term" value="P:brown fat cell proliferation"/>
    <property type="evidence" value="ECO:0007669"/>
    <property type="project" value="Ensembl"/>
</dbReference>
<dbReference type="GO" id="GO:0042446">
    <property type="term" value="P:hormone biosynthetic process"/>
    <property type="evidence" value="ECO:0007669"/>
    <property type="project" value="UniProtKB-KW"/>
</dbReference>
<dbReference type="GO" id="GO:0040018">
    <property type="term" value="P:positive regulation of multicellular organism growth"/>
    <property type="evidence" value="ECO:0000315"/>
    <property type="project" value="MGI"/>
</dbReference>
<dbReference type="GO" id="GO:0001666">
    <property type="term" value="P:response to hypoxia"/>
    <property type="evidence" value="ECO:0007669"/>
    <property type="project" value="Ensembl"/>
</dbReference>
<dbReference type="GO" id="GO:0097474">
    <property type="term" value="P:retinal cone cell apoptotic process"/>
    <property type="evidence" value="ECO:0000315"/>
    <property type="project" value="MGI"/>
</dbReference>
<dbReference type="GO" id="GO:0046549">
    <property type="term" value="P:retinal cone cell development"/>
    <property type="evidence" value="ECO:0000315"/>
    <property type="project" value="MGI"/>
</dbReference>
<dbReference type="GO" id="GO:0042404">
    <property type="term" value="P:thyroid hormone catabolic process"/>
    <property type="evidence" value="ECO:0000314"/>
    <property type="project" value="MGI"/>
</dbReference>
<dbReference type="FunFam" id="3.40.30.10:FF:000239">
    <property type="entry name" value="Iodothyronine deiodinase"/>
    <property type="match status" value="1"/>
</dbReference>
<dbReference type="Gene3D" id="3.40.30.10">
    <property type="entry name" value="Glutaredoxin"/>
    <property type="match status" value="1"/>
</dbReference>
<dbReference type="InterPro" id="IPR000643">
    <property type="entry name" value="Iodothyronine_deiodinase"/>
</dbReference>
<dbReference type="InterPro" id="IPR008261">
    <property type="entry name" value="Iodothyronine_deiodinase_AS"/>
</dbReference>
<dbReference type="InterPro" id="IPR027252">
    <property type="entry name" value="Iodothyronine_deiodinase_I/III"/>
</dbReference>
<dbReference type="InterPro" id="IPR036249">
    <property type="entry name" value="Thioredoxin-like_sf"/>
</dbReference>
<dbReference type="PANTHER" id="PTHR11781">
    <property type="entry name" value="IODOTHYRONINE DEIODINASE"/>
    <property type="match status" value="1"/>
</dbReference>
<dbReference type="PANTHER" id="PTHR11781:SF4">
    <property type="entry name" value="THYROXINE 5-DEIODINASE"/>
    <property type="match status" value="1"/>
</dbReference>
<dbReference type="Pfam" id="PF00837">
    <property type="entry name" value="T4_deiodinase"/>
    <property type="match status" value="1"/>
</dbReference>
<dbReference type="PIRSF" id="PIRSF001330">
    <property type="entry name" value="IOD"/>
    <property type="match status" value="1"/>
</dbReference>
<dbReference type="PIRSF" id="PIRSF500144">
    <property type="entry name" value="IODI_III"/>
    <property type="match status" value="1"/>
</dbReference>
<dbReference type="SUPFAM" id="SSF52833">
    <property type="entry name" value="Thioredoxin-like"/>
    <property type="match status" value="1"/>
</dbReference>
<dbReference type="PROSITE" id="PS01205">
    <property type="entry name" value="T4_DEIODINASE"/>
    <property type="match status" value="1"/>
</dbReference>
<feature type="chain" id="PRO_0000154324" description="Thyroxine 5-deiodinase">
    <location>
        <begin position="1"/>
        <end position="304"/>
    </location>
</feature>
<feature type="topological domain" description="Cytoplasmic" evidence="2">
    <location>
        <begin position="1"/>
        <end position="44"/>
    </location>
</feature>
<feature type="transmembrane region" description="Helical; Signal-anchor for type II membrane protein" evidence="2">
    <location>
        <begin position="45"/>
        <end position="67"/>
    </location>
</feature>
<feature type="topological domain" description="Extracellular" evidence="2">
    <location>
        <begin position="68"/>
        <end position="304"/>
    </location>
</feature>
<feature type="region of interest" description="Disordered" evidence="3">
    <location>
        <begin position="1"/>
        <end position="22"/>
    </location>
</feature>
<feature type="active site" evidence="1">
    <location>
        <position position="170"/>
    </location>
</feature>
<feature type="non-standard amino acid" description="Selenocysteine" evidence="1">
    <location>
        <position position="170"/>
    </location>
</feature>
<feature type="strand" evidence="5">
    <location>
        <begin position="120"/>
        <end position="122"/>
    </location>
</feature>
<feature type="strand" evidence="5">
    <location>
        <begin position="139"/>
        <end position="141"/>
    </location>
</feature>
<feature type="turn" evidence="5">
    <location>
        <begin position="143"/>
        <end position="145"/>
    </location>
</feature>
<feature type="strand" evidence="5">
    <location>
        <begin position="148"/>
        <end position="150"/>
    </location>
</feature>
<feature type="helix" evidence="5">
    <location>
        <begin position="151"/>
        <end position="154"/>
    </location>
</feature>
<feature type="strand" evidence="5">
    <location>
        <begin position="161"/>
        <end position="166"/>
    </location>
</feature>
<feature type="helix" evidence="5">
    <location>
        <begin position="171"/>
        <end position="175"/>
    </location>
</feature>
<feature type="helix" evidence="5">
    <location>
        <begin position="177"/>
        <end position="187"/>
    </location>
</feature>
<feature type="turn" evidence="5">
    <location>
        <begin position="188"/>
        <end position="190"/>
    </location>
</feature>
<feature type="strand" evidence="5">
    <location>
        <begin position="192"/>
        <end position="197"/>
    </location>
</feature>
<feature type="strand" evidence="5">
    <location>
        <begin position="206"/>
        <end position="208"/>
    </location>
</feature>
<feature type="helix" evidence="5">
    <location>
        <begin position="222"/>
        <end position="234"/>
    </location>
</feature>
<feature type="strand" evidence="5">
    <location>
        <begin position="241"/>
        <end position="244"/>
    </location>
</feature>
<feature type="helix" evidence="5">
    <location>
        <begin position="249"/>
        <end position="253"/>
    </location>
</feature>
<feature type="strand" evidence="5">
    <location>
        <begin position="260"/>
        <end position="265"/>
    </location>
</feature>
<feature type="strand" evidence="5">
    <location>
        <begin position="268"/>
        <end position="272"/>
    </location>
</feature>
<feature type="helix" evidence="5">
    <location>
        <begin position="280"/>
        <end position="297"/>
    </location>
</feature>
<keyword id="KW-0002">3D-structure</keyword>
<keyword id="KW-1003">Cell membrane</keyword>
<keyword id="KW-0967">Endosome</keyword>
<keyword id="KW-0472">Membrane</keyword>
<keyword id="KW-0560">Oxidoreductase</keyword>
<keyword id="KW-1185">Reference proteome</keyword>
<keyword id="KW-0712">Selenocysteine</keyword>
<keyword id="KW-0735">Signal-anchor</keyword>
<keyword id="KW-0893">Thyroid hormones biosynthesis</keyword>
<keyword id="KW-0812">Transmembrane</keyword>
<keyword id="KW-1133">Transmembrane helix</keyword>
<gene>
    <name type="primary">Dio3</name>
</gene>